<proteinExistence type="inferred from homology"/>
<dbReference type="EMBL" id="BX251411">
    <property type="protein sequence ID" value="CAD67200.1"/>
    <property type="molecule type" value="Genomic_DNA"/>
</dbReference>
<dbReference type="RefSeq" id="WP_011096480.1">
    <property type="nucleotide sequence ID" value="NC_004551.1"/>
</dbReference>
<dbReference type="SMR" id="P67324"/>
<dbReference type="GeneID" id="67388313"/>
<dbReference type="KEGG" id="tws:TW533"/>
<dbReference type="HOGENOM" id="CLU_108412_1_0_11"/>
<dbReference type="GO" id="GO:0005524">
    <property type="term" value="F:ATP binding"/>
    <property type="evidence" value="ECO:0007669"/>
    <property type="project" value="UniProtKB-KW"/>
</dbReference>
<dbReference type="GO" id="GO:0003677">
    <property type="term" value="F:DNA binding"/>
    <property type="evidence" value="ECO:0007669"/>
    <property type="project" value="UniProtKB-KW"/>
</dbReference>
<dbReference type="GO" id="GO:0008270">
    <property type="term" value="F:zinc ion binding"/>
    <property type="evidence" value="ECO:0007669"/>
    <property type="project" value="UniProtKB-UniRule"/>
</dbReference>
<dbReference type="GO" id="GO:0045892">
    <property type="term" value="P:negative regulation of DNA-templated transcription"/>
    <property type="evidence" value="ECO:0007669"/>
    <property type="project" value="UniProtKB-UniRule"/>
</dbReference>
<dbReference type="HAMAP" id="MF_00440">
    <property type="entry name" value="NrdR"/>
    <property type="match status" value="1"/>
</dbReference>
<dbReference type="InterPro" id="IPR005144">
    <property type="entry name" value="ATP-cone_dom"/>
</dbReference>
<dbReference type="InterPro" id="IPR055173">
    <property type="entry name" value="NrdR-like_N"/>
</dbReference>
<dbReference type="InterPro" id="IPR003796">
    <property type="entry name" value="RNR_NrdR-like"/>
</dbReference>
<dbReference type="NCBIfam" id="TIGR00244">
    <property type="entry name" value="transcriptional regulator NrdR"/>
    <property type="match status" value="1"/>
</dbReference>
<dbReference type="PANTHER" id="PTHR30455">
    <property type="entry name" value="TRANSCRIPTIONAL REPRESSOR NRDR"/>
    <property type="match status" value="1"/>
</dbReference>
<dbReference type="PANTHER" id="PTHR30455:SF2">
    <property type="entry name" value="TRANSCRIPTIONAL REPRESSOR NRDR"/>
    <property type="match status" value="1"/>
</dbReference>
<dbReference type="Pfam" id="PF03477">
    <property type="entry name" value="ATP-cone"/>
    <property type="match status" value="1"/>
</dbReference>
<dbReference type="Pfam" id="PF22811">
    <property type="entry name" value="Zn_ribbon_NrdR"/>
    <property type="match status" value="1"/>
</dbReference>
<dbReference type="PROSITE" id="PS51161">
    <property type="entry name" value="ATP_CONE"/>
    <property type="match status" value="1"/>
</dbReference>
<keyword id="KW-0067">ATP-binding</keyword>
<keyword id="KW-0238">DNA-binding</keyword>
<keyword id="KW-0479">Metal-binding</keyword>
<keyword id="KW-0547">Nucleotide-binding</keyword>
<keyword id="KW-0678">Repressor</keyword>
<keyword id="KW-0804">Transcription</keyword>
<keyword id="KW-0805">Transcription regulation</keyword>
<keyword id="KW-0862">Zinc</keyword>
<keyword id="KW-0863">Zinc-finger</keyword>
<protein>
    <recommendedName>
        <fullName evidence="1">Transcriptional repressor NrdR</fullName>
    </recommendedName>
</protein>
<accession>P67324</accession>
<accession>Q83HK7</accession>
<accession>Q83N05</accession>
<comment type="function">
    <text evidence="1">Negatively regulates transcription of bacterial ribonucleotide reductase nrd genes and operons by binding to NrdR-boxes.</text>
</comment>
<comment type="cofactor">
    <cofactor evidence="1">
        <name>Zn(2+)</name>
        <dbReference type="ChEBI" id="CHEBI:29105"/>
    </cofactor>
    <text evidence="1">Binds 1 zinc ion.</text>
</comment>
<comment type="similarity">
    <text evidence="1">Belongs to the NrdR family.</text>
</comment>
<organism>
    <name type="scientific">Tropheryma whipplei (strain TW08/27)</name>
    <name type="common">Whipple's bacillus</name>
    <dbReference type="NCBI Taxonomy" id="218496"/>
    <lineage>
        <taxon>Bacteria</taxon>
        <taxon>Bacillati</taxon>
        <taxon>Actinomycetota</taxon>
        <taxon>Actinomycetes</taxon>
        <taxon>Micrococcales</taxon>
        <taxon>Tropherymataceae</taxon>
        <taxon>Tropheryma</taxon>
    </lineage>
</organism>
<gene>
    <name evidence="1" type="primary">nrdR</name>
    <name type="ordered locus">TW533</name>
</gene>
<evidence type="ECO:0000255" key="1">
    <source>
        <dbReference type="HAMAP-Rule" id="MF_00440"/>
    </source>
</evidence>
<name>NRDR_TROW8</name>
<feature type="chain" id="PRO_0000182375" description="Transcriptional repressor NrdR">
    <location>
        <begin position="1"/>
        <end position="147"/>
    </location>
</feature>
<feature type="domain" description="ATP-cone" evidence="1">
    <location>
        <begin position="46"/>
        <end position="136"/>
    </location>
</feature>
<feature type="zinc finger region" evidence="1">
    <location>
        <begin position="3"/>
        <end position="34"/>
    </location>
</feature>
<reference key="1">
    <citation type="journal article" date="2003" name="Lancet">
        <title>Sequencing and analysis of the genome of the Whipple's disease bacterium Tropheryma whipplei.</title>
        <authorList>
            <person name="Bentley S.D."/>
            <person name="Maiwald M."/>
            <person name="Murphy L.D."/>
            <person name="Pallen M.J."/>
            <person name="Yeats C.A."/>
            <person name="Dover L.G."/>
            <person name="Norbertczak H.T."/>
            <person name="Besra G.S."/>
            <person name="Quail M.A."/>
            <person name="Harris D.E."/>
            <person name="von Herbay A."/>
            <person name="Goble A."/>
            <person name="Rutter S."/>
            <person name="Squares R."/>
            <person name="Squares S."/>
            <person name="Barrell B.G."/>
            <person name="Parkhill J."/>
            <person name="Relman D.A."/>
        </authorList>
    </citation>
    <scope>NUCLEOTIDE SEQUENCE [LARGE SCALE GENOMIC DNA]</scope>
    <source>
        <strain>TW08/27</strain>
    </source>
</reference>
<sequence>MRCLFCRSDDTKVIDSRTSEDGISIRRRRECQLCKRRFSTLETASLTVIKRNGTSEPFRREKVVTGVHKACQGRPVTKADLAVLAQRVEESLRASGNSQVDSNDIGLAILPELLRLDQVAYIRFASVYQDFDSLEDFSRAVERLKNQ</sequence>